<sequence>MKLLFFTALVLVVISLIEVEAENERACIPLEKECTKTPGNCCSGLKCDCYRRFEQGVAKGIQCWCIEKDVTYKGV</sequence>
<name>TX604_LYCSI</name>
<keyword id="KW-1015">Disulfide bond</keyword>
<keyword id="KW-0964">Secreted</keyword>
<keyword id="KW-0732">Signal</keyword>
<keyword id="KW-0800">Toxin</keyword>
<dbReference type="EMBL" id="EU926038">
    <property type="protein sequence ID" value="ACI41370.1"/>
    <property type="molecule type" value="mRNA"/>
</dbReference>
<dbReference type="EMBL" id="FM864042">
    <property type="protein sequence ID" value="CAS03639.1"/>
    <property type="molecule type" value="mRNA"/>
</dbReference>
<dbReference type="SMR" id="B6DCV4"/>
<dbReference type="ArachnoServer" id="AS000975">
    <property type="toxin name" value="U6-lycotoxin-Ls1d"/>
</dbReference>
<dbReference type="GO" id="GO:0005576">
    <property type="term" value="C:extracellular region"/>
    <property type="evidence" value="ECO:0007669"/>
    <property type="project" value="UniProtKB-SubCell"/>
</dbReference>
<dbReference type="GO" id="GO:0090729">
    <property type="term" value="F:toxin activity"/>
    <property type="evidence" value="ECO:0007669"/>
    <property type="project" value="UniProtKB-KW"/>
</dbReference>
<dbReference type="InterPro" id="IPR019553">
    <property type="entry name" value="Spider_toxin_CSTX_knottin"/>
</dbReference>
<dbReference type="Pfam" id="PF10530">
    <property type="entry name" value="Toxin_35"/>
    <property type="match status" value="1"/>
</dbReference>
<protein>
    <recommendedName>
        <fullName>U6-lycotoxin-Ls1d</fullName>
    </recommendedName>
    <alternativeName>
        <fullName>Toxin-like structure LSTX-F4</fullName>
    </alternativeName>
</protein>
<evidence type="ECO:0000250" key="1"/>
<evidence type="ECO:0000255" key="2"/>
<evidence type="ECO:0000305" key="3"/>
<organism>
    <name type="scientific">Lycosa singoriensis</name>
    <name type="common">Wolf spider</name>
    <name type="synonym">Aranea singoriensis</name>
    <dbReference type="NCBI Taxonomy" id="434756"/>
    <lineage>
        <taxon>Eukaryota</taxon>
        <taxon>Metazoa</taxon>
        <taxon>Ecdysozoa</taxon>
        <taxon>Arthropoda</taxon>
        <taxon>Chelicerata</taxon>
        <taxon>Arachnida</taxon>
        <taxon>Araneae</taxon>
        <taxon>Araneomorphae</taxon>
        <taxon>Entelegynae</taxon>
        <taxon>Lycosoidea</taxon>
        <taxon>Lycosidae</taxon>
        <taxon>Lycosa</taxon>
    </lineage>
</organism>
<reference key="1">
    <citation type="journal article" date="2010" name="Zoology">
        <title>Transcriptome analysis of the venom glands of the Chinese wolf spider Lycosa singoriensis.</title>
        <authorList>
            <person name="Zhang Y."/>
            <person name="Chen J."/>
            <person name="Tang X."/>
            <person name="Wang F."/>
            <person name="Jiang L."/>
            <person name="Xiong X."/>
            <person name="Wang M."/>
            <person name="Rong M."/>
            <person name="Liu Z."/>
            <person name="Liang S."/>
        </authorList>
    </citation>
    <scope>NUCLEOTIDE SEQUENCE [LARGE SCALE MRNA]</scope>
    <source>
        <tissue>Venom gland</tissue>
    </source>
</reference>
<comment type="subcellular location">
    <subcellularLocation>
        <location evidence="1">Secreted</location>
    </subcellularLocation>
</comment>
<comment type="tissue specificity">
    <text>Expressed by the venom gland.</text>
</comment>
<comment type="PTM">
    <text evidence="1">Contains 4 disulfide bonds.</text>
</comment>
<comment type="similarity">
    <text evidence="3">Belongs to the neurotoxin 19 (CSTX) family. 06 (U6-Lctx) subfamily.</text>
</comment>
<feature type="signal peptide" evidence="2">
    <location>
        <begin position="1"/>
        <end position="21"/>
    </location>
</feature>
<feature type="propeptide" id="PRO_0000401729" evidence="1">
    <location>
        <begin position="22"/>
        <end position="25"/>
    </location>
</feature>
<feature type="chain" id="PRO_0000401730" description="U6-lycotoxin-Ls1d">
    <location>
        <begin position="26"/>
        <end position="75"/>
    </location>
</feature>
<accession>B6DCV4</accession>
<proteinExistence type="evidence at transcript level"/>